<comment type="function">
    <text evidence="1">Catalyzes the irreversible NADPH-dependent deamination of GMP to IMP. It functions in the conversion of nucleobase, nucleoside and nucleotide derivatives of G to A nucleotides, and in maintaining the intracellular balance of A and G nucleotides.</text>
</comment>
<comment type="catalytic activity">
    <reaction evidence="1">
        <text>IMP + NH4(+) + NADP(+) = GMP + NADPH + 2 H(+)</text>
        <dbReference type="Rhea" id="RHEA:17185"/>
        <dbReference type="ChEBI" id="CHEBI:15378"/>
        <dbReference type="ChEBI" id="CHEBI:28938"/>
        <dbReference type="ChEBI" id="CHEBI:57783"/>
        <dbReference type="ChEBI" id="CHEBI:58053"/>
        <dbReference type="ChEBI" id="CHEBI:58115"/>
        <dbReference type="ChEBI" id="CHEBI:58349"/>
        <dbReference type="EC" id="1.7.1.7"/>
    </reaction>
</comment>
<comment type="similarity">
    <text evidence="1">Belongs to the IMPDH/GMPR family. GuaC type 2 subfamily.</text>
</comment>
<gene>
    <name evidence="1" type="primary">guaC</name>
    <name type="ordered locus">SAOUHSC_01330</name>
</gene>
<keyword id="KW-0521">NADP</keyword>
<keyword id="KW-0560">Oxidoreductase</keyword>
<keyword id="KW-1185">Reference proteome</keyword>
<accession>Q2FYU4</accession>
<proteinExistence type="inferred from homology"/>
<protein>
    <recommendedName>
        <fullName evidence="1">GMP reductase</fullName>
        <ecNumber evidence="1">1.7.1.7</ecNumber>
    </recommendedName>
    <alternativeName>
        <fullName evidence="1">Guanosine 5'-monophosphate oxidoreductase</fullName>
        <shortName evidence="1">Guanosine monophosphate reductase</shortName>
    </alternativeName>
</protein>
<reference key="1">
    <citation type="book" date="2006" name="Gram positive pathogens, 2nd edition">
        <title>The Staphylococcus aureus NCTC 8325 genome.</title>
        <editorList>
            <person name="Fischetti V."/>
            <person name="Novick R."/>
            <person name="Ferretti J."/>
            <person name="Portnoy D."/>
            <person name="Rood J."/>
        </editorList>
        <authorList>
            <person name="Gillaspy A.F."/>
            <person name="Worrell V."/>
            <person name="Orvis J."/>
            <person name="Roe B.A."/>
            <person name="Dyer D.W."/>
            <person name="Iandolo J.J."/>
        </authorList>
    </citation>
    <scope>NUCLEOTIDE SEQUENCE [LARGE SCALE GENOMIC DNA]</scope>
    <source>
        <strain>NCTC 8325 / PS 47</strain>
    </source>
</reference>
<sequence length="325" mass="36116">MKIFDYEDIQLIPNKCIVESRSECDTTIQFGPKKFKLPVVPANMQTVMNEKLAKWFAENDYFYIMHRFDEEARIPFIKHMQNSGLFASISVGVKKAEFDFIEKLAQEKLIPEYITIDIAHGHSDSVINMIKHIKTHIPDSFVIAGNVGTPEGVRELENAGADATKVGIGPGRVCITKIKTGFGTGGWQLAALNICSKAARKPLIADGGIRTHGDIAKSIRFGASMVMIGSLFAAHEESPGETVELDGKQYKEYFGSASEFQKGEHKNVEGKKMFVEHKGSLMDTLKEMQQDLQSSISYAGGKDLKSLRTVDYVIVRNSIFNGDRD</sequence>
<evidence type="ECO:0000255" key="1">
    <source>
        <dbReference type="HAMAP-Rule" id="MF_01511"/>
    </source>
</evidence>
<organism>
    <name type="scientific">Staphylococcus aureus (strain NCTC 8325 / PS 47)</name>
    <dbReference type="NCBI Taxonomy" id="93061"/>
    <lineage>
        <taxon>Bacteria</taxon>
        <taxon>Bacillati</taxon>
        <taxon>Bacillota</taxon>
        <taxon>Bacilli</taxon>
        <taxon>Bacillales</taxon>
        <taxon>Staphylococcaceae</taxon>
        <taxon>Staphylococcus</taxon>
    </lineage>
</organism>
<feature type="chain" id="PRO_0000294285" description="GMP reductase">
    <location>
        <begin position="1"/>
        <end position="325"/>
    </location>
</feature>
<feature type="active site" description="Thioimidate intermediate" evidence="1">
    <location>
        <position position="174"/>
    </location>
</feature>
<feature type="binding site" evidence="1">
    <location>
        <begin position="203"/>
        <end position="226"/>
    </location>
    <ligand>
        <name>NADP(+)</name>
        <dbReference type="ChEBI" id="CHEBI:58349"/>
    </ligand>
</feature>
<name>GUAC_STAA8</name>
<dbReference type="EC" id="1.7.1.7" evidence="1"/>
<dbReference type="EMBL" id="CP000253">
    <property type="protein sequence ID" value="ABD30428.1"/>
    <property type="molecule type" value="Genomic_DNA"/>
</dbReference>
<dbReference type="RefSeq" id="WP_000688126.1">
    <property type="nucleotide sequence ID" value="NZ_LS483365.1"/>
</dbReference>
<dbReference type="RefSeq" id="YP_499860.1">
    <property type="nucleotide sequence ID" value="NC_007795.1"/>
</dbReference>
<dbReference type="SMR" id="Q2FYU4"/>
<dbReference type="STRING" id="93061.SAOUHSC_01330"/>
<dbReference type="PaxDb" id="1280-SAXN108_1354"/>
<dbReference type="GeneID" id="3920195"/>
<dbReference type="KEGG" id="sao:SAOUHSC_01330"/>
<dbReference type="PATRIC" id="fig|93061.5.peg.1216"/>
<dbReference type="eggNOG" id="COG0516">
    <property type="taxonomic scope" value="Bacteria"/>
</dbReference>
<dbReference type="HOGENOM" id="CLU_022552_5_0_9"/>
<dbReference type="OrthoDB" id="9805398at2"/>
<dbReference type="PRO" id="PR:Q2FYU4"/>
<dbReference type="Proteomes" id="UP000008816">
    <property type="component" value="Chromosome"/>
</dbReference>
<dbReference type="GO" id="GO:1902560">
    <property type="term" value="C:GMP reductase complex"/>
    <property type="evidence" value="ECO:0007669"/>
    <property type="project" value="InterPro"/>
</dbReference>
<dbReference type="GO" id="GO:0003920">
    <property type="term" value="F:GMP reductase activity"/>
    <property type="evidence" value="ECO:0007669"/>
    <property type="project" value="UniProtKB-UniRule"/>
</dbReference>
<dbReference type="GO" id="GO:0006163">
    <property type="term" value="P:purine nucleotide metabolic process"/>
    <property type="evidence" value="ECO:0007669"/>
    <property type="project" value="UniProtKB-UniRule"/>
</dbReference>
<dbReference type="CDD" id="cd00381">
    <property type="entry name" value="IMPDH"/>
    <property type="match status" value="1"/>
</dbReference>
<dbReference type="FunFam" id="3.20.20.70:FF:000079">
    <property type="entry name" value="GMP reductase"/>
    <property type="match status" value="1"/>
</dbReference>
<dbReference type="Gene3D" id="3.20.20.70">
    <property type="entry name" value="Aldolase class I"/>
    <property type="match status" value="1"/>
</dbReference>
<dbReference type="HAMAP" id="MF_01511">
    <property type="entry name" value="GMP_reduct_type2"/>
    <property type="match status" value="1"/>
</dbReference>
<dbReference type="InterPro" id="IPR013785">
    <property type="entry name" value="Aldolase_TIM"/>
</dbReference>
<dbReference type="InterPro" id="IPR050139">
    <property type="entry name" value="GMP_reductase"/>
</dbReference>
<dbReference type="InterPro" id="IPR005994">
    <property type="entry name" value="GuaC_type_2"/>
</dbReference>
<dbReference type="InterPro" id="IPR015875">
    <property type="entry name" value="IMP_DH/GMP_Rdtase_CS"/>
</dbReference>
<dbReference type="InterPro" id="IPR001093">
    <property type="entry name" value="IMP_DH_GMPRt"/>
</dbReference>
<dbReference type="NCBIfam" id="TIGR01306">
    <property type="entry name" value="GMP_reduct_2"/>
    <property type="match status" value="1"/>
</dbReference>
<dbReference type="NCBIfam" id="NF003966">
    <property type="entry name" value="PRK05458.1"/>
    <property type="match status" value="1"/>
</dbReference>
<dbReference type="PANTHER" id="PTHR43170">
    <property type="entry name" value="GMP REDUCTASE"/>
    <property type="match status" value="1"/>
</dbReference>
<dbReference type="PANTHER" id="PTHR43170:SF5">
    <property type="entry name" value="GMP REDUCTASE"/>
    <property type="match status" value="1"/>
</dbReference>
<dbReference type="Pfam" id="PF00478">
    <property type="entry name" value="IMPDH"/>
    <property type="match status" value="1"/>
</dbReference>
<dbReference type="PIRSF" id="PIRSF036500">
    <property type="entry name" value="GMP_red_Firmic"/>
    <property type="match status" value="1"/>
</dbReference>
<dbReference type="SMART" id="SM01240">
    <property type="entry name" value="IMPDH"/>
    <property type="match status" value="1"/>
</dbReference>
<dbReference type="SUPFAM" id="SSF51412">
    <property type="entry name" value="Inosine monophosphate dehydrogenase (IMPDH)"/>
    <property type="match status" value="1"/>
</dbReference>
<dbReference type="PROSITE" id="PS00487">
    <property type="entry name" value="IMP_DH_GMP_RED"/>
    <property type="match status" value="1"/>
</dbReference>